<reference key="1">
    <citation type="journal article" date="2005" name="Nat. Genet.">
        <title>The complete genome sequence of Francisella tularensis, the causative agent of tularemia.</title>
        <authorList>
            <person name="Larsson P."/>
            <person name="Oyston P.C.F."/>
            <person name="Chain P."/>
            <person name="Chu M.C."/>
            <person name="Duffield M."/>
            <person name="Fuxelius H.-H."/>
            <person name="Garcia E."/>
            <person name="Haelltorp G."/>
            <person name="Johansson D."/>
            <person name="Isherwood K.E."/>
            <person name="Karp P.D."/>
            <person name="Larsson E."/>
            <person name="Liu Y."/>
            <person name="Michell S."/>
            <person name="Prior J."/>
            <person name="Prior R."/>
            <person name="Malfatti S."/>
            <person name="Sjoestedt A."/>
            <person name="Svensson K."/>
            <person name="Thompson N."/>
            <person name="Vergez L."/>
            <person name="Wagg J.K."/>
            <person name="Wren B.W."/>
            <person name="Lindler L.E."/>
            <person name="Andersson S.G.E."/>
            <person name="Forsman M."/>
            <person name="Titball R.W."/>
        </authorList>
    </citation>
    <scope>NUCLEOTIDE SEQUENCE [LARGE SCALE GENOMIC DNA]</scope>
    <source>
        <strain>SCHU S4 / Schu 4</strain>
    </source>
</reference>
<dbReference type="EMBL" id="AJ749949">
    <property type="protein sequence ID" value="CAG44982.1"/>
    <property type="molecule type" value="Genomic_DNA"/>
</dbReference>
<dbReference type="RefSeq" id="WP_003014378.1">
    <property type="nucleotide sequence ID" value="NZ_CP010290.1"/>
</dbReference>
<dbReference type="RefSeq" id="YP_169398.1">
    <property type="nucleotide sequence ID" value="NC_006570.2"/>
</dbReference>
<dbReference type="SMR" id="Q5NHU4"/>
<dbReference type="STRING" id="177416.FTT_0349"/>
<dbReference type="DNASU" id="3191973"/>
<dbReference type="EnsemblBacteria" id="CAG44982">
    <property type="protein sequence ID" value="CAG44982"/>
    <property type="gene ID" value="FTT_0349"/>
</dbReference>
<dbReference type="GeneID" id="75264237"/>
<dbReference type="KEGG" id="ftu:FTT_0349"/>
<dbReference type="eggNOG" id="COG0522">
    <property type="taxonomic scope" value="Bacteria"/>
</dbReference>
<dbReference type="OrthoDB" id="9803672at2"/>
<dbReference type="Proteomes" id="UP000001174">
    <property type="component" value="Chromosome"/>
</dbReference>
<dbReference type="GO" id="GO:0015935">
    <property type="term" value="C:small ribosomal subunit"/>
    <property type="evidence" value="ECO:0007669"/>
    <property type="project" value="InterPro"/>
</dbReference>
<dbReference type="GO" id="GO:0019843">
    <property type="term" value="F:rRNA binding"/>
    <property type="evidence" value="ECO:0007669"/>
    <property type="project" value="UniProtKB-UniRule"/>
</dbReference>
<dbReference type="GO" id="GO:0003735">
    <property type="term" value="F:structural constituent of ribosome"/>
    <property type="evidence" value="ECO:0007669"/>
    <property type="project" value="InterPro"/>
</dbReference>
<dbReference type="GO" id="GO:0042274">
    <property type="term" value="P:ribosomal small subunit biogenesis"/>
    <property type="evidence" value="ECO:0007669"/>
    <property type="project" value="TreeGrafter"/>
</dbReference>
<dbReference type="GO" id="GO:0006412">
    <property type="term" value="P:translation"/>
    <property type="evidence" value="ECO:0007669"/>
    <property type="project" value="UniProtKB-UniRule"/>
</dbReference>
<dbReference type="CDD" id="cd00165">
    <property type="entry name" value="S4"/>
    <property type="match status" value="1"/>
</dbReference>
<dbReference type="FunFam" id="1.10.1050.10:FF:000001">
    <property type="entry name" value="30S ribosomal protein S4"/>
    <property type="match status" value="1"/>
</dbReference>
<dbReference type="FunFam" id="3.10.290.10:FF:000001">
    <property type="entry name" value="30S ribosomal protein S4"/>
    <property type="match status" value="1"/>
</dbReference>
<dbReference type="Gene3D" id="1.10.1050.10">
    <property type="entry name" value="Ribosomal Protein S4 Delta 41, Chain A, domain 1"/>
    <property type="match status" value="1"/>
</dbReference>
<dbReference type="Gene3D" id="3.10.290.10">
    <property type="entry name" value="RNA-binding S4 domain"/>
    <property type="match status" value="1"/>
</dbReference>
<dbReference type="HAMAP" id="MF_01306_B">
    <property type="entry name" value="Ribosomal_uS4_B"/>
    <property type="match status" value="1"/>
</dbReference>
<dbReference type="InterPro" id="IPR022801">
    <property type="entry name" value="Ribosomal_uS4"/>
</dbReference>
<dbReference type="InterPro" id="IPR005709">
    <property type="entry name" value="Ribosomal_uS4_bac-type"/>
</dbReference>
<dbReference type="InterPro" id="IPR018079">
    <property type="entry name" value="Ribosomal_uS4_CS"/>
</dbReference>
<dbReference type="InterPro" id="IPR001912">
    <property type="entry name" value="Ribosomal_uS4_N"/>
</dbReference>
<dbReference type="InterPro" id="IPR002942">
    <property type="entry name" value="S4_RNA-bd"/>
</dbReference>
<dbReference type="InterPro" id="IPR036986">
    <property type="entry name" value="S4_RNA-bd_sf"/>
</dbReference>
<dbReference type="NCBIfam" id="NF003717">
    <property type="entry name" value="PRK05327.1"/>
    <property type="match status" value="1"/>
</dbReference>
<dbReference type="NCBIfam" id="TIGR01017">
    <property type="entry name" value="rpsD_bact"/>
    <property type="match status" value="1"/>
</dbReference>
<dbReference type="PANTHER" id="PTHR11831">
    <property type="entry name" value="30S 40S RIBOSOMAL PROTEIN"/>
    <property type="match status" value="1"/>
</dbReference>
<dbReference type="PANTHER" id="PTHR11831:SF4">
    <property type="entry name" value="SMALL RIBOSOMAL SUBUNIT PROTEIN US4M"/>
    <property type="match status" value="1"/>
</dbReference>
<dbReference type="Pfam" id="PF00163">
    <property type="entry name" value="Ribosomal_S4"/>
    <property type="match status" value="1"/>
</dbReference>
<dbReference type="Pfam" id="PF01479">
    <property type="entry name" value="S4"/>
    <property type="match status" value="1"/>
</dbReference>
<dbReference type="SMART" id="SM01390">
    <property type="entry name" value="Ribosomal_S4"/>
    <property type="match status" value="1"/>
</dbReference>
<dbReference type="SMART" id="SM00363">
    <property type="entry name" value="S4"/>
    <property type="match status" value="1"/>
</dbReference>
<dbReference type="SUPFAM" id="SSF55174">
    <property type="entry name" value="Alpha-L RNA-binding motif"/>
    <property type="match status" value="1"/>
</dbReference>
<dbReference type="PROSITE" id="PS00632">
    <property type="entry name" value="RIBOSOMAL_S4"/>
    <property type="match status" value="1"/>
</dbReference>
<dbReference type="PROSITE" id="PS50889">
    <property type="entry name" value="S4"/>
    <property type="match status" value="1"/>
</dbReference>
<keyword id="KW-1185">Reference proteome</keyword>
<keyword id="KW-0687">Ribonucleoprotein</keyword>
<keyword id="KW-0689">Ribosomal protein</keyword>
<keyword id="KW-0694">RNA-binding</keyword>
<keyword id="KW-0699">rRNA-binding</keyword>
<feature type="chain" id="PRO_0000132385" description="Small ribosomal subunit protein uS4">
    <location>
        <begin position="1"/>
        <end position="206"/>
    </location>
</feature>
<feature type="domain" description="S4 RNA-binding" evidence="1">
    <location>
        <begin position="96"/>
        <end position="158"/>
    </location>
</feature>
<proteinExistence type="inferred from homology"/>
<comment type="function">
    <text evidence="1">One of the primary rRNA binding proteins, it binds directly to 16S rRNA where it nucleates assembly of the body of the 30S subunit.</text>
</comment>
<comment type="function">
    <text evidence="1">With S5 and S12 plays an important role in translational accuracy.</text>
</comment>
<comment type="subunit">
    <text evidence="1">Part of the 30S ribosomal subunit. Contacts protein S5. The interaction surface between S4 and S5 is involved in control of translational fidelity.</text>
</comment>
<comment type="similarity">
    <text evidence="1">Belongs to the universal ribosomal protein uS4 family.</text>
</comment>
<gene>
    <name evidence="1" type="primary">rpsD</name>
    <name type="ordered locus">FTT_0349</name>
</gene>
<protein>
    <recommendedName>
        <fullName evidence="1">Small ribosomal subunit protein uS4</fullName>
    </recommendedName>
    <alternativeName>
        <fullName evidence="2">30S ribosomal protein S4</fullName>
    </alternativeName>
</protein>
<name>RS4_FRATT</name>
<accession>Q5NHU4</accession>
<evidence type="ECO:0000255" key="1">
    <source>
        <dbReference type="HAMAP-Rule" id="MF_01306"/>
    </source>
</evidence>
<evidence type="ECO:0000305" key="2"/>
<organism>
    <name type="scientific">Francisella tularensis subsp. tularensis (strain SCHU S4 / Schu 4)</name>
    <dbReference type="NCBI Taxonomy" id="177416"/>
    <lineage>
        <taxon>Bacteria</taxon>
        <taxon>Pseudomonadati</taxon>
        <taxon>Pseudomonadota</taxon>
        <taxon>Gammaproteobacteria</taxon>
        <taxon>Thiotrichales</taxon>
        <taxon>Francisellaceae</taxon>
        <taxon>Francisella</taxon>
    </lineage>
</organism>
<sequence length="206" mass="23237">MARYLGPKCKLSRREGTDLFLKSGVKANDEKCKMNTAPGQHGARRARLSDYGLQLREKQKVRRMYGILEGQFKKYYVEASRRKGNTGATLLELLESRLDNVVYRMGFAATRAEARQLVVHKGIMVNGHTCNVPSAQVKAGDVVAVREKAKKQLRIQNAVELAKHRKELSWIDVNTDSLEGTMKSSPDRSELSADINEQLIIELYSK</sequence>